<gene>
    <name type="ordered locus">MJ0589</name>
</gene>
<accession>Q58009</accession>
<organism>
    <name type="scientific">Methanocaldococcus jannaschii (strain ATCC 43067 / DSM 2661 / JAL-1 / JCM 10045 / NBRC 100440)</name>
    <name type="common">Methanococcus jannaschii</name>
    <dbReference type="NCBI Taxonomy" id="243232"/>
    <lineage>
        <taxon>Archaea</taxon>
        <taxon>Methanobacteriati</taxon>
        <taxon>Methanobacteriota</taxon>
        <taxon>Methanomada group</taxon>
        <taxon>Methanococci</taxon>
        <taxon>Methanococcales</taxon>
        <taxon>Methanocaldococcaceae</taxon>
        <taxon>Methanocaldococcus</taxon>
    </lineage>
</organism>
<reference key="1">
    <citation type="journal article" date="1996" name="Science">
        <title>Complete genome sequence of the methanogenic archaeon, Methanococcus jannaschii.</title>
        <authorList>
            <person name="Bult C.J."/>
            <person name="White O."/>
            <person name="Olsen G.J."/>
            <person name="Zhou L."/>
            <person name="Fleischmann R.D."/>
            <person name="Sutton G.G."/>
            <person name="Blake J.A."/>
            <person name="FitzGerald L.M."/>
            <person name="Clayton R.A."/>
            <person name="Gocayne J.D."/>
            <person name="Kerlavage A.R."/>
            <person name="Dougherty B.A."/>
            <person name="Tomb J.-F."/>
            <person name="Adams M.D."/>
            <person name="Reich C.I."/>
            <person name="Overbeek R."/>
            <person name="Kirkness E.F."/>
            <person name="Weinstock K.G."/>
            <person name="Merrick J.M."/>
            <person name="Glodek A."/>
            <person name="Scott J.L."/>
            <person name="Geoghagen N.S.M."/>
            <person name="Weidman J.F."/>
            <person name="Fuhrmann J.L."/>
            <person name="Nguyen D."/>
            <person name="Utterback T.R."/>
            <person name="Kelley J.M."/>
            <person name="Peterson J.D."/>
            <person name="Sadow P.W."/>
            <person name="Hanna M.C."/>
            <person name="Cotton M.D."/>
            <person name="Roberts K.M."/>
            <person name="Hurst M.A."/>
            <person name="Kaine B.P."/>
            <person name="Borodovsky M."/>
            <person name="Klenk H.-P."/>
            <person name="Fraser C.M."/>
            <person name="Smith H.O."/>
            <person name="Woese C.R."/>
            <person name="Venter J.C."/>
        </authorList>
    </citation>
    <scope>NUCLEOTIDE SEQUENCE [LARGE SCALE GENOMIC DNA]</scope>
    <source>
        <strain>ATCC 43067 / DSM 2661 / JAL-1 / JCM 10045 / NBRC 100440</strain>
    </source>
</reference>
<protein>
    <recommendedName>
        <fullName>Uncharacterized protein MJ0589</fullName>
    </recommendedName>
</protein>
<dbReference type="EMBL" id="L77117">
    <property type="protein sequence ID" value="AAB98585.1"/>
    <property type="molecule type" value="Genomic_DNA"/>
</dbReference>
<dbReference type="PIR" id="E64373">
    <property type="entry name" value="E64373"/>
</dbReference>
<dbReference type="RefSeq" id="WP_010870093.1">
    <property type="nucleotide sequence ID" value="NC_000909.1"/>
</dbReference>
<dbReference type="STRING" id="243232.MJ_0589"/>
<dbReference type="PaxDb" id="243232-MJ_0589"/>
<dbReference type="EnsemblBacteria" id="AAB98585">
    <property type="protein sequence ID" value="AAB98585"/>
    <property type="gene ID" value="MJ_0589"/>
</dbReference>
<dbReference type="GeneID" id="1451454"/>
<dbReference type="KEGG" id="mja:MJ_0589"/>
<dbReference type="eggNOG" id="arCOG08294">
    <property type="taxonomic scope" value="Archaea"/>
</dbReference>
<dbReference type="HOGENOM" id="CLU_2191035_0_0_2"/>
<dbReference type="InParanoid" id="Q58009"/>
<dbReference type="OrthoDB" id="63460at2157"/>
<dbReference type="Proteomes" id="UP000000805">
    <property type="component" value="Chromosome"/>
</dbReference>
<sequence>MRPKEVWRELLEIAKNYYDEDKIFYSKTKRGAYRIKSFTKDKIVIEKLRGKLDEVLGKKRFVENWDKLVHGVEWNIPPAIKSFLKLHPKIVENEDGNLIYKE</sequence>
<name>Y589_METJA</name>
<feature type="chain" id="PRO_0000106947" description="Uncharacterized protein MJ0589">
    <location>
        <begin position="1"/>
        <end position="102"/>
    </location>
</feature>
<proteinExistence type="predicted"/>
<keyword id="KW-1185">Reference proteome</keyword>